<name>GLSA_PHOPR</name>
<protein>
    <recommendedName>
        <fullName evidence="1">Glutaminase</fullName>
        <ecNumber evidence="1">3.5.1.2</ecNumber>
    </recommendedName>
</protein>
<dbReference type="EC" id="3.5.1.2" evidence="1"/>
<dbReference type="EMBL" id="CR378673">
    <property type="protein sequence ID" value="CAG21466.1"/>
    <property type="molecule type" value="Genomic_DNA"/>
</dbReference>
<dbReference type="RefSeq" id="WP_011219721.1">
    <property type="nucleotide sequence ID" value="NC_006370.1"/>
</dbReference>
<dbReference type="SMR" id="Q6LML1"/>
<dbReference type="STRING" id="298386.PBPRA3151"/>
<dbReference type="KEGG" id="ppr:PBPRA3151"/>
<dbReference type="eggNOG" id="COG2066">
    <property type="taxonomic scope" value="Bacteria"/>
</dbReference>
<dbReference type="HOGENOM" id="CLU_027932_1_1_6"/>
<dbReference type="Proteomes" id="UP000000593">
    <property type="component" value="Chromosome 1"/>
</dbReference>
<dbReference type="GO" id="GO:0004359">
    <property type="term" value="F:glutaminase activity"/>
    <property type="evidence" value="ECO:0007669"/>
    <property type="project" value="UniProtKB-UniRule"/>
</dbReference>
<dbReference type="GO" id="GO:0006537">
    <property type="term" value="P:glutamate biosynthetic process"/>
    <property type="evidence" value="ECO:0007669"/>
    <property type="project" value="TreeGrafter"/>
</dbReference>
<dbReference type="GO" id="GO:0006543">
    <property type="term" value="P:glutamine catabolic process"/>
    <property type="evidence" value="ECO:0007669"/>
    <property type="project" value="TreeGrafter"/>
</dbReference>
<dbReference type="FunFam" id="3.40.710.10:FF:000005">
    <property type="entry name" value="Glutaminase"/>
    <property type="match status" value="1"/>
</dbReference>
<dbReference type="Gene3D" id="3.40.710.10">
    <property type="entry name" value="DD-peptidase/beta-lactamase superfamily"/>
    <property type="match status" value="1"/>
</dbReference>
<dbReference type="HAMAP" id="MF_00313">
    <property type="entry name" value="Glutaminase"/>
    <property type="match status" value="1"/>
</dbReference>
<dbReference type="InterPro" id="IPR012338">
    <property type="entry name" value="Beta-lactam/transpept-like"/>
</dbReference>
<dbReference type="InterPro" id="IPR015868">
    <property type="entry name" value="Glutaminase"/>
</dbReference>
<dbReference type="NCBIfam" id="TIGR03814">
    <property type="entry name" value="Gln_ase"/>
    <property type="match status" value="1"/>
</dbReference>
<dbReference type="NCBIfam" id="NF002132">
    <property type="entry name" value="PRK00971.1-1"/>
    <property type="match status" value="1"/>
</dbReference>
<dbReference type="NCBIfam" id="NF002133">
    <property type="entry name" value="PRK00971.1-2"/>
    <property type="match status" value="1"/>
</dbReference>
<dbReference type="PANTHER" id="PTHR12544">
    <property type="entry name" value="GLUTAMINASE"/>
    <property type="match status" value="1"/>
</dbReference>
<dbReference type="PANTHER" id="PTHR12544:SF29">
    <property type="entry name" value="GLUTAMINASE"/>
    <property type="match status" value="1"/>
</dbReference>
<dbReference type="Pfam" id="PF04960">
    <property type="entry name" value="Glutaminase"/>
    <property type="match status" value="1"/>
</dbReference>
<dbReference type="SUPFAM" id="SSF56601">
    <property type="entry name" value="beta-lactamase/transpeptidase-like"/>
    <property type="match status" value="1"/>
</dbReference>
<accession>Q6LML1</accession>
<sequence length="306" mass="33101">MKPTKELLAGILDEVRPLIGQGKVADYIPALAGISATKLGIAVCYNDGEIIQAGDTQERFSIQSISKVMSLTLAMSLYEPEEIWRRVGKEPSGHAFNSMIQLELENGIPRNPFINAGALVVSDLLHSRLAAPQYRMLELVRKLSCNPHLTYDKAVAASEMQHSDRNASIAYLMRSFGNFENEVMPVLTNYFSYCSLNMSCIDLARTFSYLANKGLPLGAKKTIISQTQSKQMNALLATCGLYDGAGEFAYRVGMPGKSGVGGGIVAIVPGEMSITVWSPELDPSGNSLAGTAALELLAERIGRSIF</sequence>
<gene>
    <name evidence="1" type="primary">glsA</name>
    <name type="ordered locus">PBPRA3151</name>
</gene>
<comment type="catalytic activity">
    <reaction evidence="1">
        <text>L-glutamine + H2O = L-glutamate + NH4(+)</text>
        <dbReference type="Rhea" id="RHEA:15889"/>
        <dbReference type="ChEBI" id="CHEBI:15377"/>
        <dbReference type="ChEBI" id="CHEBI:28938"/>
        <dbReference type="ChEBI" id="CHEBI:29985"/>
        <dbReference type="ChEBI" id="CHEBI:58359"/>
        <dbReference type="EC" id="3.5.1.2"/>
    </reaction>
</comment>
<comment type="subunit">
    <text evidence="1">Homotetramer.</text>
</comment>
<comment type="similarity">
    <text evidence="1">Belongs to the glutaminase family.</text>
</comment>
<proteinExistence type="inferred from homology"/>
<evidence type="ECO:0000255" key="1">
    <source>
        <dbReference type="HAMAP-Rule" id="MF_00313"/>
    </source>
</evidence>
<feature type="chain" id="PRO_1000048339" description="Glutaminase">
    <location>
        <begin position="1"/>
        <end position="306"/>
    </location>
</feature>
<feature type="binding site" evidence="1">
    <location>
        <position position="64"/>
    </location>
    <ligand>
        <name>substrate</name>
    </ligand>
</feature>
<feature type="binding site" evidence="1">
    <location>
        <position position="115"/>
    </location>
    <ligand>
        <name>substrate</name>
    </ligand>
</feature>
<feature type="binding site" evidence="1">
    <location>
        <position position="159"/>
    </location>
    <ligand>
        <name>substrate</name>
    </ligand>
</feature>
<feature type="binding site" evidence="1">
    <location>
        <position position="166"/>
    </location>
    <ligand>
        <name>substrate</name>
    </ligand>
</feature>
<feature type="binding site" evidence="1">
    <location>
        <position position="190"/>
    </location>
    <ligand>
        <name>substrate</name>
    </ligand>
</feature>
<feature type="binding site" evidence="1">
    <location>
        <position position="242"/>
    </location>
    <ligand>
        <name>substrate</name>
    </ligand>
</feature>
<feature type="binding site" evidence="1">
    <location>
        <position position="260"/>
    </location>
    <ligand>
        <name>substrate</name>
    </ligand>
</feature>
<organism>
    <name type="scientific">Photobacterium profundum (strain SS9)</name>
    <dbReference type="NCBI Taxonomy" id="298386"/>
    <lineage>
        <taxon>Bacteria</taxon>
        <taxon>Pseudomonadati</taxon>
        <taxon>Pseudomonadota</taxon>
        <taxon>Gammaproteobacteria</taxon>
        <taxon>Vibrionales</taxon>
        <taxon>Vibrionaceae</taxon>
        <taxon>Photobacterium</taxon>
    </lineage>
</organism>
<reference key="1">
    <citation type="journal article" date="2005" name="Science">
        <title>Life at depth: Photobacterium profundum genome sequence and expression analysis.</title>
        <authorList>
            <person name="Vezzi A."/>
            <person name="Campanaro S."/>
            <person name="D'Angelo M."/>
            <person name="Simonato F."/>
            <person name="Vitulo N."/>
            <person name="Lauro F.M."/>
            <person name="Cestaro A."/>
            <person name="Malacrida G."/>
            <person name="Simionati B."/>
            <person name="Cannata N."/>
            <person name="Romualdi C."/>
            <person name="Bartlett D.H."/>
            <person name="Valle G."/>
        </authorList>
    </citation>
    <scope>NUCLEOTIDE SEQUENCE [LARGE SCALE GENOMIC DNA]</scope>
    <source>
        <strain>ATCC BAA-1253 / SS9</strain>
    </source>
</reference>
<keyword id="KW-0378">Hydrolase</keyword>
<keyword id="KW-1185">Reference proteome</keyword>